<reference key="1">
    <citation type="submission" date="2007-03" db="EMBL/GenBank/DDBJ databases">
        <authorList>
            <person name="Heidelberg J."/>
        </authorList>
    </citation>
    <scope>NUCLEOTIDE SEQUENCE [LARGE SCALE GENOMIC DNA]</scope>
    <source>
        <strain>ATCC 39541 / Classical Ogawa 395 / O395</strain>
    </source>
</reference>
<reference key="2">
    <citation type="journal article" date="2008" name="PLoS ONE">
        <title>A recalibrated molecular clock and independent origins for the cholera pandemic clones.</title>
        <authorList>
            <person name="Feng L."/>
            <person name="Reeves P.R."/>
            <person name="Lan R."/>
            <person name="Ren Y."/>
            <person name="Gao C."/>
            <person name="Zhou Z."/>
            <person name="Ren Y."/>
            <person name="Cheng J."/>
            <person name="Wang W."/>
            <person name="Wang J."/>
            <person name="Qian W."/>
            <person name="Li D."/>
            <person name="Wang L."/>
        </authorList>
    </citation>
    <scope>NUCLEOTIDE SEQUENCE [LARGE SCALE GENOMIC DNA]</scope>
    <source>
        <strain>ATCC 39541 / Classical Ogawa 395 / O395</strain>
    </source>
</reference>
<protein>
    <recommendedName>
        <fullName evidence="1">Glucose-6-phosphate isomerase</fullName>
        <shortName evidence="1">GPI</shortName>
        <ecNumber evidence="1">5.3.1.9</ecNumber>
    </recommendedName>
    <alternativeName>
        <fullName evidence="1">Phosphoglucose isomerase</fullName>
        <shortName evidence="1">PGI</shortName>
    </alternativeName>
    <alternativeName>
        <fullName evidence="1">Phosphohexose isomerase</fullName>
        <shortName evidence="1">PHI</shortName>
    </alternativeName>
</protein>
<keyword id="KW-0963">Cytoplasm</keyword>
<keyword id="KW-0312">Gluconeogenesis</keyword>
<keyword id="KW-0324">Glycolysis</keyword>
<keyword id="KW-0413">Isomerase</keyword>
<accession>A5F3J3</accession>
<accession>C3M4G8</accession>
<dbReference type="EC" id="5.3.1.9" evidence="1"/>
<dbReference type="EMBL" id="CP000627">
    <property type="protein sequence ID" value="ABQ21077.1"/>
    <property type="molecule type" value="Genomic_DNA"/>
</dbReference>
<dbReference type="EMBL" id="CP001235">
    <property type="protein sequence ID" value="ACP08440.1"/>
    <property type="molecule type" value="Genomic_DNA"/>
</dbReference>
<dbReference type="RefSeq" id="WP_000916640.1">
    <property type="nucleotide sequence ID" value="NZ_JAACZH010000040.1"/>
</dbReference>
<dbReference type="SMR" id="A5F3J3"/>
<dbReference type="KEGG" id="vco:VC0395_A2785"/>
<dbReference type="KEGG" id="vcr:VC395_0417"/>
<dbReference type="PATRIC" id="fig|345073.21.peg.405"/>
<dbReference type="eggNOG" id="COG0166">
    <property type="taxonomic scope" value="Bacteria"/>
</dbReference>
<dbReference type="HOGENOM" id="CLU_017947_3_1_6"/>
<dbReference type="OrthoDB" id="140919at2"/>
<dbReference type="UniPathway" id="UPA00109">
    <property type="reaction ID" value="UER00181"/>
</dbReference>
<dbReference type="UniPathway" id="UPA00138"/>
<dbReference type="Proteomes" id="UP000000249">
    <property type="component" value="Chromosome 2"/>
</dbReference>
<dbReference type="GO" id="GO:0005829">
    <property type="term" value="C:cytosol"/>
    <property type="evidence" value="ECO:0007669"/>
    <property type="project" value="TreeGrafter"/>
</dbReference>
<dbReference type="GO" id="GO:0097367">
    <property type="term" value="F:carbohydrate derivative binding"/>
    <property type="evidence" value="ECO:0007669"/>
    <property type="project" value="InterPro"/>
</dbReference>
<dbReference type="GO" id="GO:0004347">
    <property type="term" value="F:glucose-6-phosphate isomerase activity"/>
    <property type="evidence" value="ECO:0007669"/>
    <property type="project" value="UniProtKB-UniRule"/>
</dbReference>
<dbReference type="GO" id="GO:0048029">
    <property type="term" value="F:monosaccharide binding"/>
    <property type="evidence" value="ECO:0007669"/>
    <property type="project" value="TreeGrafter"/>
</dbReference>
<dbReference type="GO" id="GO:0006094">
    <property type="term" value="P:gluconeogenesis"/>
    <property type="evidence" value="ECO:0007669"/>
    <property type="project" value="UniProtKB-UniRule"/>
</dbReference>
<dbReference type="GO" id="GO:0051156">
    <property type="term" value="P:glucose 6-phosphate metabolic process"/>
    <property type="evidence" value="ECO:0007669"/>
    <property type="project" value="TreeGrafter"/>
</dbReference>
<dbReference type="GO" id="GO:0006096">
    <property type="term" value="P:glycolytic process"/>
    <property type="evidence" value="ECO:0007669"/>
    <property type="project" value="UniProtKB-UniRule"/>
</dbReference>
<dbReference type="CDD" id="cd05015">
    <property type="entry name" value="SIS_PGI_1"/>
    <property type="match status" value="1"/>
</dbReference>
<dbReference type="CDD" id="cd05016">
    <property type="entry name" value="SIS_PGI_2"/>
    <property type="match status" value="1"/>
</dbReference>
<dbReference type="FunFam" id="1.10.1390.10:FF:000001">
    <property type="entry name" value="Glucose-6-phosphate isomerase"/>
    <property type="match status" value="1"/>
</dbReference>
<dbReference type="FunFam" id="3.40.50.10490:FF:000004">
    <property type="entry name" value="Glucose-6-phosphate isomerase"/>
    <property type="match status" value="1"/>
</dbReference>
<dbReference type="Gene3D" id="1.10.1390.10">
    <property type="match status" value="1"/>
</dbReference>
<dbReference type="Gene3D" id="3.40.50.10490">
    <property type="entry name" value="Glucose-6-phosphate isomerase like protein, domain 1"/>
    <property type="match status" value="2"/>
</dbReference>
<dbReference type="HAMAP" id="MF_00473">
    <property type="entry name" value="G6P_isomerase"/>
    <property type="match status" value="1"/>
</dbReference>
<dbReference type="InterPro" id="IPR001672">
    <property type="entry name" value="G6P_Isomerase"/>
</dbReference>
<dbReference type="InterPro" id="IPR023096">
    <property type="entry name" value="G6P_Isomerase_C"/>
</dbReference>
<dbReference type="InterPro" id="IPR018189">
    <property type="entry name" value="Phosphoglucose_isomerase_CS"/>
</dbReference>
<dbReference type="InterPro" id="IPR046348">
    <property type="entry name" value="SIS_dom_sf"/>
</dbReference>
<dbReference type="InterPro" id="IPR035476">
    <property type="entry name" value="SIS_PGI_1"/>
</dbReference>
<dbReference type="InterPro" id="IPR035482">
    <property type="entry name" value="SIS_PGI_2"/>
</dbReference>
<dbReference type="NCBIfam" id="NF001211">
    <property type="entry name" value="PRK00179.1"/>
    <property type="match status" value="1"/>
</dbReference>
<dbReference type="PANTHER" id="PTHR11469">
    <property type="entry name" value="GLUCOSE-6-PHOSPHATE ISOMERASE"/>
    <property type="match status" value="1"/>
</dbReference>
<dbReference type="PANTHER" id="PTHR11469:SF1">
    <property type="entry name" value="GLUCOSE-6-PHOSPHATE ISOMERASE"/>
    <property type="match status" value="1"/>
</dbReference>
<dbReference type="Pfam" id="PF00342">
    <property type="entry name" value="PGI"/>
    <property type="match status" value="1"/>
</dbReference>
<dbReference type="PRINTS" id="PR00662">
    <property type="entry name" value="G6PISOMERASE"/>
</dbReference>
<dbReference type="SUPFAM" id="SSF53697">
    <property type="entry name" value="SIS domain"/>
    <property type="match status" value="1"/>
</dbReference>
<dbReference type="PROSITE" id="PS00765">
    <property type="entry name" value="P_GLUCOSE_ISOMERASE_1"/>
    <property type="match status" value="1"/>
</dbReference>
<dbReference type="PROSITE" id="PS00174">
    <property type="entry name" value="P_GLUCOSE_ISOMERASE_2"/>
    <property type="match status" value="1"/>
</dbReference>
<dbReference type="PROSITE" id="PS51463">
    <property type="entry name" value="P_GLUCOSE_ISOMERASE_3"/>
    <property type="match status" value="1"/>
</dbReference>
<sequence length="550" mass="60692">MLKNINPTQTQAWKALTAHFESAQDMDLKALFAQDSERFAKYSARFGQDILVDYSKNLVNAETMQHLFALAKETDLQSAITAMFKGEAINQTEDRAVLHTALRNRSNSPVLVNGEDVMPAVNAVLAKMKAFSERVIGGEWKGFTGKAITDVVNIGIGGSDLGPYMVTEALVPYKNHLTMHFVSNVDGTHMAETLKNVDPETTLFLVASKTFTTQETMTNAHTARDWFLKAAGDEAHVAKHFAALSTNGKAVAEFGIDTDNMFEFWDWVGGRYSLWSAIGLSIILSIGYDNFVELLAGAHEMDQHFVNTPFESNIPVILALIGIWYNNFHGAESEAILPYDQYLHRFAAYFQQGNMESNGKYVDRDGNPVTYQTGPIIWGEPGTNGQHAFYQLIHQGTKLIPCDFIAPAVSHNLVGDHHQKLMSNFFAQTEALAFGKSAQAVQAELEKAGKSAAEIAALVPFKVFEGNRPTNSILVKQITPRTLGNLIAMYEHKIFVQGVIWNIFSFDQWGVELGKQLANQILPELADSAAVTSHDSSTNGLINAFKAFRA</sequence>
<feature type="chain" id="PRO_1000072398" description="Glucose-6-phosphate isomerase">
    <location>
        <begin position="1"/>
        <end position="550"/>
    </location>
</feature>
<feature type="active site" description="Proton donor" evidence="1">
    <location>
        <position position="356"/>
    </location>
</feature>
<feature type="active site" evidence="1">
    <location>
        <position position="387"/>
    </location>
</feature>
<feature type="active site" evidence="1">
    <location>
        <position position="515"/>
    </location>
</feature>
<evidence type="ECO:0000255" key="1">
    <source>
        <dbReference type="HAMAP-Rule" id="MF_00473"/>
    </source>
</evidence>
<organism>
    <name type="scientific">Vibrio cholerae serotype O1 (strain ATCC 39541 / Classical Ogawa 395 / O395)</name>
    <dbReference type="NCBI Taxonomy" id="345073"/>
    <lineage>
        <taxon>Bacteria</taxon>
        <taxon>Pseudomonadati</taxon>
        <taxon>Pseudomonadota</taxon>
        <taxon>Gammaproteobacteria</taxon>
        <taxon>Vibrionales</taxon>
        <taxon>Vibrionaceae</taxon>
        <taxon>Vibrio</taxon>
    </lineage>
</organism>
<gene>
    <name evidence="1" type="primary">pgi</name>
    <name type="ordered locus">VC0395_A2785</name>
    <name type="ordered locus">VC395_0417</name>
</gene>
<name>G6PI_VIBC3</name>
<proteinExistence type="inferred from homology"/>
<comment type="function">
    <text evidence="1">Catalyzes the reversible isomerization of glucose-6-phosphate to fructose-6-phosphate.</text>
</comment>
<comment type="catalytic activity">
    <reaction evidence="1">
        <text>alpha-D-glucose 6-phosphate = beta-D-fructose 6-phosphate</text>
        <dbReference type="Rhea" id="RHEA:11816"/>
        <dbReference type="ChEBI" id="CHEBI:57634"/>
        <dbReference type="ChEBI" id="CHEBI:58225"/>
        <dbReference type="EC" id="5.3.1.9"/>
    </reaction>
</comment>
<comment type="pathway">
    <text evidence="1">Carbohydrate biosynthesis; gluconeogenesis.</text>
</comment>
<comment type="pathway">
    <text evidence="1">Carbohydrate degradation; glycolysis; D-glyceraldehyde 3-phosphate and glycerone phosphate from D-glucose: step 2/4.</text>
</comment>
<comment type="subcellular location">
    <subcellularLocation>
        <location evidence="1">Cytoplasm</location>
    </subcellularLocation>
</comment>
<comment type="similarity">
    <text evidence="1">Belongs to the GPI family.</text>
</comment>